<reference key="1">
    <citation type="journal article" date="1989" name="J. Biol. Chem.">
        <title>A dense core vesicle protein is restricted to the cortex of granules in the exocrine atrial gland of Aplysia california.</title>
        <authorList>
            <person name="Sossin W.S."/>
            <person name="Kreiner T."/>
            <person name="Barinaga M."/>
            <person name="Schilling J."/>
            <person name="Scheller R.H."/>
        </authorList>
    </citation>
    <scope>NUCLEOTIDE SEQUENCE [MRNA]</scope>
    <scope>PARTIAL PROTEIN SEQUENCE</scope>
    <source>
        <tissue>Atrial gland</tissue>
    </source>
</reference>
<reference key="2">
    <citation type="journal article" date="1999" name="Abstr. - Soc. Neurosci.">
        <title>Mollusk-derived growth factor, an Aplysia protein related to insect-derived growth factor.</title>
        <authorList>
            <person name="Akalal D.-B.G."/>
            <person name="Bocangel D.B."/>
            <person name="Nagle G.T."/>
        </authorList>
    </citation>
    <scope>NUCLEOTIDE SEQUENCE [MRNA]</scope>
</reference>
<reference key="3">
    <citation type="journal article" date="2003" name="Brain Res. Mol. Brain Res.">
        <title>Aplysia mollusk-derived growth factor is a mitogen with adenosine deaminase activity and is expressed in the developing central nervous system.</title>
        <authorList>
            <person name="Akalal D.B."/>
            <person name="Bottenstein J.E."/>
            <person name="Lee S.H."/>
            <person name="Han J.H."/>
            <person name="Chang D.J."/>
            <person name="Kaang B.K."/>
            <person name="Nagle G.T."/>
        </authorList>
    </citation>
    <scope>FUNCTION</scope>
    <scope>CATALYTIC ACTIVITY</scope>
    <scope>TISSUE SPECIFICITY</scope>
</reference>
<keyword id="KW-0903">Direct protein sequencing</keyword>
<keyword id="KW-1015">Disulfide bond</keyword>
<keyword id="KW-0325">Glycoprotein</keyword>
<keyword id="KW-0378">Hydrolase</keyword>
<keyword id="KW-0479">Metal-binding</keyword>
<keyword id="KW-0964">Secreted</keyword>
<keyword id="KW-0732">Signal</keyword>
<keyword id="KW-0862">Zinc</keyword>
<organism>
    <name type="scientific">Aplysia californica</name>
    <name type="common">California sea hare</name>
    <dbReference type="NCBI Taxonomy" id="6500"/>
    <lineage>
        <taxon>Eukaryota</taxon>
        <taxon>Metazoa</taxon>
        <taxon>Spiralia</taxon>
        <taxon>Lophotrochozoa</taxon>
        <taxon>Mollusca</taxon>
        <taxon>Gastropoda</taxon>
        <taxon>Heterobranchia</taxon>
        <taxon>Euthyneura</taxon>
        <taxon>Tectipleura</taxon>
        <taxon>Aplysiida</taxon>
        <taxon>Aplysioidea</taxon>
        <taxon>Aplysiidae</taxon>
        <taxon>Aplysia</taxon>
    </lineage>
</organism>
<proteinExistence type="evidence at protein level"/>
<evidence type="ECO:0000250" key="1"/>
<evidence type="ECO:0000255" key="2"/>
<evidence type="ECO:0000269" key="3">
    <source>
    </source>
</evidence>
<evidence type="ECO:0000305" key="4"/>
<comment type="function">
    <text evidence="3">Adenosine deaminase that may contribute to the degradation of extracellular adenosine, a signaling molecule that controls a variety of cellular responses. May play a role in the regulation of cell proliferation.</text>
</comment>
<comment type="catalytic activity">
    <reaction evidence="3">
        <text>adenosine + H2O + H(+) = inosine + NH4(+)</text>
        <dbReference type="Rhea" id="RHEA:24408"/>
        <dbReference type="ChEBI" id="CHEBI:15377"/>
        <dbReference type="ChEBI" id="CHEBI:15378"/>
        <dbReference type="ChEBI" id="CHEBI:16335"/>
        <dbReference type="ChEBI" id="CHEBI:17596"/>
        <dbReference type="ChEBI" id="CHEBI:28938"/>
        <dbReference type="EC" id="3.5.4.4"/>
    </reaction>
</comment>
<comment type="cofactor">
    <cofactor evidence="1">
        <name>Zn(2+)</name>
        <dbReference type="ChEBI" id="CHEBI:29105"/>
    </cofactor>
    <text evidence="1">Binds 1 zinc ion per subunit.</text>
</comment>
<comment type="subcellular location">
    <subcellularLocation>
        <location>Secreted</location>
    </subcellularLocation>
    <text>Dense core vesicles (DCV).</text>
</comment>
<comment type="tissue specificity">
    <text evidence="3">Detected in egg cordons and in the developing central nervous system. Not detected in adult central nervous system (at protein level). Atrial gland.</text>
</comment>
<comment type="similarity">
    <text evidence="4">Belongs to the metallo-dependent hydrolases superfamily. Adenosine and AMP deaminases family. ADGF subfamily.</text>
</comment>
<comment type="sequence caution" evidence="4">
    <conflict type="frameshift">
        <sequence resource="EMBL-CDS" id="AAA27741"/>
    </conflict>
</comment>
<feature type="signal peptide" evidence="2">
    <location>
        <begin position="1"/>
        <end position="25"/>
    </location>
</feature>
<feature type="chain" id="PRO_0000006728" description="Adenosine deaminase AGSA">
    <location>
        <begin position="26"/>
        <end position="525"/>
    </location>
</feature>
<feature type="active site" description="Proton donor" evidence="1">
    <location>
        <position position="364"/>
    </location>
</feature>
<feature type="active site" description="Proton acceptor" evidence="1">
    <location>
        <position position="389"/>
    </location>
</feature>
<feature type="binding site" evidence="1">
    <location>
        <position position="117"/>
    </location>
    <ligand>
        <name>Zn(2+)</name>
        <dbReference type="ChEBI" id="CHEBI:29105"/>
        <note>catalytic</note>
    </ligand>
</feature>
<feature type="binding site" evidence="1">
    <location>
        <position position="119"/>
    </location>
    <ligand>
        <name>Zn(2+)</name>
        <dbReference type="ChEBI" id="CHEBI:29105"/>
        <note>catalytic</note>
    </ligand>
</feature>
<feature type="binding site" evidence="1">
    <location>
        <position position="120"/>
    </location>
    <ligand>
        <name>substrate</name>
    </ligand>
</feature>
<feature type="binding site" evidence="1">
    <location>
        <begin position="207"/>
        <end position="214"/>
    </location>
    <ligand>
        <name>substrate</name>
    </ligand>
</feature>
<feature type="binding site" evidence="1">
    <location>
        <position position="329"/>
    </location>
    <ligand>
        <name>substrate</name>
    </ligand>
</feature>
<feature type="binding site" evidence="1">
    <location>
        <position position="361"/>
    </location>
    <ligand>
        <name>Zn(2+)</name>
        <dbReference type="ChEBI" id="CHEBI:29105"/>
        <note>catalytic</note>
    </ligand>
</feature>
<feature type="binding site" evidence="1">
    <location>
        <position position="446"/>
    </location>
    <ligand>
        <name>Zn(2+)</name>
        <dbReference type="ChEBI" id="CHEBI:29105"/>
        <note>catalytic</note>
    </ligand>
</feature>
<feature type="binding site" evidence="1">
    <location>
        <position position="447"/>
    </location>
    <ligand>
        <name>substrate</name>
    </ligand>
</feature>
<feature type="glycosylation site" description="N-linked (GlcNAc...) asparagine" evidence="2">
    <location>
        <position position="81"/>
    </location>
</feature>
<feature type="glycosylation site" description="N-linked (GlcNAc...) asparagine" evidence="2">
    <location>
        <position position="132"/>
    </location>
</feature>
<feature type="glycosylation site" description="N-linked (GlcNAc...) asparagine" evidence="2">
    <location>
        <position position="188"/>
    </location>
</feature>
<feature type="glycosylation site" description="N-linked (GlcNAc...) asparagine" evidence="2">
    <location>
        <position position="334"/>
    </location>
</feature>
<feature type="disulfide bond" evidence="1">
    <location>
        <begin position="142"/>
        <end position="163"/>
    </location>
</feature>
<feature type="sequence conflict" description="In Ref. 1; AAA27741." evidence="4" ref="1">
    <original>FSTHNFVAIATF</original>
    <variation>CQRIISCYSNV</variation>
    <location>
        <begin position="4"/>
        <end position="15"/>
    </location>
</feature>
<feature type="sequence conflict" description="In Ref. 1; AAA27741." evidence="4" ref="1">
    <original>I</original>
    <variation>M</variation>
    <location>
        <position position="75"/>
    </location>
</feature>
<feature type="sequence conflict" description="In Ref. 1; AAA27741." evidence="4" ref="1">
    <original>I</original>
    <variation>V</variation>
    <location>
        <position position="106"/>
    </location>
</feature>
<sequence length="525" mass="60059">MSSFSTHNFVAIATFVCWFCCLATAAPLTSKAAYLLKRNSLIEEDASRKLGAKIVLTNEEKVLDDFILAEKRKLIDDSRLNQTEYMPAASFYRSKDFIDTTFAYKIIQDMPKGGALHLHDLAIASLDWVVKNATYRDNVYMCMDKDNDVNLRVLQLIPPDPFCVWKLVATERANSGDVEAFDDWLKKNISYLSTDPVTQYATVDSVWVRFNKYFAQVIGLLFYAPIMRDYYRQALEEFRADNVQYIELRSQLFGFFELDGTVHDAEFGLNLYKSVTEEFQREYPDFIGAKIILSGLRFKSQEEILNEVKIAMDLHKKYPDFFLGYDLVGQEDPNFSLLHYLDALLYPSIQNPPYRLPYFFHAAETNWQETEVDYNLADALLLNTTRVGHGFALIKHPRFTELAKENGVAVEVNPISNQILGLVRDVRNHALVPLIADDYPIVISSDDPGAWEASPLSHDFYVALMDLCGRDTALTFLKQLALNSIRYSAMSDTEKVAAKAKWTTQWDKFVKTSVEGLKPHINDRS</sequence>
<accession>P15287</accession>
<accession>O96697</accession>
<dbReference type="EC" id="3.5.4.4"/>
<dbReference type="EMBL" id="J05059">
    <property type="protein sequence ID" value="AAA27741.1"/>
    <property type="status" value="ALT_FRAME"/>
    <property type="molecule type" value="mRNA"/>
</dbReference>
<dbReference type="EMBL" id="AF117336">
    <property type="protein sequence ID" value="AAD13112.1"/>
    <property type="molecule type" value="mRNA"/>
</dbReference>
<dbReference type="PIR" id="A34413">
    <property type="entry name" value="A34413"/>
</dbReference>
<dbReference type="RefSeq" id="NP_001191564.1">
    <property type="nucleotide sequence ID" value="NM_001204635.1"/>
</dbReference>
<dbReference type="RefSeq" id="NP_001191668.1">
    <property type="nucleotide sequence ID" value="NM_001204739.1"/>
</dbReference>
<dbReference type="SMR" id="P15287"/>
<dbReference type="EnsemblMetazoa" id="NM_001204635.1">
    <property type="protein sequence ID" value="NP_001191564.1"/>
    <property type="gene ID" value="LOC100533339"/>
</dbReference>
<dbReference type="GeneID" id="100533339"/>
<dbReference type="GeneID" id="100533516"/>
<dbReference type="OrthoDB" id="7202371at2759"/>
<dbReference type="Proteomes" id="UP000694888">
    <property type="component" value="Unplaced"/>
</dbReference>
<dbReference type="GO" id="GO:0005615">
    <property type="term" value="C:extracellular space"/>
    <property type="evidence" value="ECO:0007669"/>
    <property type="project" value="InterPro"/>
</dbReference>
<dbReference type="GO" id="GO:0004000">
    <property type="term" value="F:adenosine deaminase activity"/>
    <property type="evidence" value="ECO:0007669"/>
    <property type="project" value="InterPro"/>
</dbReference>
<dbReference type="GO" id="GO:0046872">
    <property type="term" value="F:metal ion binding"/>
    <property type="evidence" value="ECO:0007669"/>
    <property type="project" value="UniProtKB-KW"/>
</dbReference>
<dbReference type="GO" id="GO:0006154">
    <property type="term" value="P:adenosine catabolic process"/>
    <property type="evidence" value="ECO:0007669"/>
    <property type="project" value="InterPro"/>
</dbReference>
<dbReference type="GO" id="GO:0046103">
    <property type="term" value="P:inosine biosynthetic process"/>
    <property type="evidence" value="ECO:0007669"/>
    <property type="project" value="TreeGrafter"/>
</dbReference>
<dbReference type="CDD" id="cd01321">
    <property type="entry name" value="ADGF"/>
    <property type="match status" value="1"/>
</dbReference>
<dbReference type="FunFam" id="3.20.20.140:FF:000017">
    <property type="entry name" value="Adenosine deaminase 2"/>
    <property type="match status" value="1"/>
</dbReference>
<dbReference type="Gene3D" id="3.20.20.140">
    <property type="entry name" value="Metal-dependent hydrolases"/>
    <property type="match status" value="1"/>
</dbReference>
<dbReference type="InterPro" id="IPR001365">
    <property type="entry name" value="A_deaminase_dom"/>
</dbReference>
<dbReference type="InterPro" id="IPR013659">
    <property type="entry name" value="A_deaminase_N"/>
</dbReference>
<dbReference type="InterPro" id="IPR006331">
    <property type="entry name" value="ADGF"/>
</dbReference>
<dbReference type="InterPro" id="IPR006330">
    <property type="entry name" value="Ado/ade_deaminase"/>
</dbReference>
<dbReference type="InterPro" id="IPR032466">
    <property type="entry name" value="Metal_Hydrolase"/>
</dbReference>
<dbReference type="NCBIfam" id="TIGR01431">
    <property type="entry name" value="adm_rel"/>
    <property type="match status" value="1"/>
</dbReference>
<dbReference type="PANTHER" id="PTHR11409">
    <property type="entry name" value="ADENOSINE DEAMINASE"/>
    <property type="match status" value="1"/>
</dbReference>
<dbReference type="PANTHER" id="PTHR11409:SF39">
    <property type="entry name" value="ADENOSINE DEAMINASE 2"/>
    <property type="match status" value="1"/>
</dbReference>
<dbReference type="Pfam" id="PF00962">
    <property type="entry name" value="A_deaminase"/>
    <property type="match status" value="1"/>
</dbReference>
<dbReference type="Pfam" id="PF08451">
    <property type="entry name" value="A_deaminase_N"/>
    <property type="match status" value="1"/>
</dbReference>
<dbReference type="SUPFAM" id="SSF51556">
    <property type="entry name" value="Metallo-dependent hydrolases"/>
    <property type="match status" value="1"/>
</dbReference>
<protein>
    <recommendedName>
        <fullName>Adenosine deaminase AGSA</fullName>
        <ecNumber>3.5.4.4</ecNumber>
    </recommendedName>
    <alternativeName>
        <fullName>Atrial gland-specific antigen</fullName>
        <shortName>AGSA</shortName>
    </alternativeName>
    <alternativeName>
        <fullName>Mollusk-derived growth factor</fullName>
        <shortName>MDGF</shortName>
    </alternativeName>
</protein>
<name>AGSA_APLCA</name>